<protein>
    <recommendedName>
        <fullName evidence="1">Membrane progestin receptor alpha</fullName>
        <shortName evidence="1">mPR alpha</shortName>
    </recommendedName>
    <alternativeName>
        <fullName evidence="1">Membrane progesterone P4 receptor alpha</fullName>
    </alternativeName>
    <alternativeName>
        <fullName evidence="1">Membrane progesterone receptor alpha</fullName>
    </alternativeName>
    <alternativeName>
        <fullName evidence="4">PPAR-gamma-induced liver protein</fullName>
    </alternativeName>
    <alternativeName>
        <fullName>Progesterone and adipoQ receptor family member 7</fullName>
    </alternativeName>
    <alternativeName>
        <fullName evidence="1">Progestin and adipoQ receptor family member 7</fullName>
    </alternativeName>
    <alternativeName>
        <fullName>Progestin and adipoQ receptor family member VII</fullName>
    </alternativeName>
</protein>
<evidence type="ECO:0000250" key="1">
    <source>
        <dbReference type="UniProtKB" id="Q86WK9"/>
    </source>
</evidence>
<evidence type="ECO:0000255" key="2"/>
<evidence type="ECO:0000269" key="3">
    <source>
    </source>
</evidence>
<evidence type="ECO:0000303" key="4">
    <source>
    </source>
</evidence>
<evidence type="ECO:0000305" key="5"/>
<evidence type="ECO:0000312" key="6">
    <source>
        <dbReference type="MGI" id="MGI:1919154"/>
    </source>
</evidence>
<reference key="1">
    <citation type="journal article" date="2003" name="Proc. Natl. Acad. Sci. U.S.A.">
        <title>Identification, classification, and partial characterization of genes in humans and other vertebrates homologous to a fish membrane progestin receptor.</title>
        <authorList>
            <person name="Zhu Y."/>
            <person name="Bond J."/>
            <person name="Thomas P."/>
        </authorList>
    </citation>
    <scope>NUCLEOTIDE SEQUENCE [MRNA]</scope>
    <source>
        <strain>C57BL/6J</strain>
        <tissue>Brain</tissue>
    </source>
</reference>
<reference key="2">
    <citation type="journal article" date="2004" name="Biochimie">
        <title>Identification of promethin and PGLP as two novel up-regulated genes in PPARgamma1-induced adipogenic mouse liver.</title>
        <authorList>
            <person name="Yu S."/>
            <person name="Viswakarma N."/>
            <person name="Batra S.K."/>
            <person name="Sambasiva Rao M."/>
            <person name="Reddy J.K."/>
        </authorList>
    </citation>
    <scope>NUCLEOTIDE SEQUENCE [MRNA]</scope>
    <scope>TISSUE SPECIFICITY</scope>
    <scope>INDUCTION</scope>
    <source>
        <strain>C57BL/6J</strain>
    </source>
</reference>
<reference key="3">
    <citation type="journal article" date="2005" name="J. Mol. Evol.">
        <title>PAQR proteins: a novel membrane receptor family defined by an ancient 7-transmembrane pass motif.</title>
        <authorList>
            <person name="Tang Y.T."/>
            <person name="Hu T."/>
            <person name="Arterburn M."/>
            <person name="Boyle B."/>
            <person name="Bright J.M."/>
            <person name="Emtage P.C."/>
            <person name="Funk W.D."/>
        </authorList>
    </citation>
    <scope>NUCLEOTIDE SEQUENCE [MRNA]</scope>
    <source>
        <strain>C57BL/6J</strain>
    </source>
</reference>
<reference key="4">
    <citation type="journal article" date="2005" name="Science">
        <title>The transcriptional landscape of the mammalian genome.</title>
        <authorList>
            <person name="Carninci P."/>
            <person name="Kasukawa T."/>
            <person name="Katayama S."/>
            <person name="Gough J."/>
            <person name="Frith M.C."/>
            <person name="Maeda N."/>
            <person name="Oyama R."/>
            <person name="Ravasi T."/>
            <person name="Lenhard B."/>
            <person name="Wells C."/>
            <person name="Kodzius R."/>
            <person name="Shimokawa K."/>
            <person name="Bajic V.B."/>
            <person name="Brenner S.E."/>
            <person name="Batalov S."/>
            <person name="Forrest A.R."/>
            <person name="Zavolan M."/>
            <person name="Davis M.J."/>
            <person name="Wilming L.G."/>
            <person name="Aidinis V."/>
            <person name="Allen J.E."/>
            <person name="Ambesi-Impiombato A."/>
            <person name="Apweiler R."/>
            <person name="Aturaliya R.N."/>
            <person name="Bailey T.L."/>
            <person name="Bansal M."/>
            <person name="Baxter L."/>
            <person name="Beisel K.W."/>
            <person name="Bersano T."/>
            <person name="Bono H."/>
            <person name="Chalk A.M."/>
            <person name="Chiu K.P."/>
            <person name="Choudhary V."/>
            <person name="Christoffels A."/>
            <person name="Clutterbuck D.R."/>
            <person name="Crowe M.L."/>
            <person name="Dalla E."/>
            <person name="Dalrymple B.P."/>
            <person name="de Bono B."/>
            <person name="Della Gatta G."/>
            <person name="di Bernardo D."/>
            <person name="Down T."/>
            <person name="Engstrom P."/>
            <person name="Fagiolini M."/>
            <person name="Faulkner G."/>
            <person name="Fletcher C.F."/>
            <person name="Fukushima T."/>
            <person name="Furuno M."/>
            <person name="Futaki S."/>
            <person name="Gariboldi M."/>
            <person name="Georgii-Hemming P."/>
            <person name="Gingeras T.R."/>
            <person name="Gojobori T."/>
            <person name="Green R.E."/>
            <person name="Gustincich S."/>
            <person name="Harbers M."/>
            <person name="Hayashi Y."/>
            <person name="Hensch T.K."/>
            <person name="Hirokawa N."/>
            <person name="Hill D."/>
            <person name="Huminiecki L."/>
            <person name="Iacono M."/>
            <person name="Ikeo K."/>
            <person name="Iwama A."/>
            <person name="Ishikawa T."/>
            <person name="Jakt M."/>
            <person name="Kanapin A."/>
            <person name="Katoh M."/>
            <person name="Kawasawa Y."/>
            <person name="Kelso J."/>
            <person name="Kitamura H."/>
            <person name="Kitano H."/>
            <person name="Kollias G."/>
            <person name="Krishnan S.P."/>
            <person name="Kruger A."/>
            <person name="Kummerfeld S.K."/>
            <person name="Kurochkin I.V."/>
            <person name="Lareau L.F."/>
            <person name="Lazarevic D."/>
            <person name="Lipovich L."/>
            <person name="Liu J."/>
            <person name="Liuni S."/>
            <person name="McWilliam S."/>
            <person name="Madan Babu M."/>
            <person name="Madera M."/>
            <person name="Marchionni L."/>
            <person name="Matsuda H."/>
            <person name="Matsuzawa S."/>
            <person name="Miki H."/>
            <person name="Mignone F."/>
            <person name="Miyake S."/>
            <person name="Morris K."/>
            <person name="Mottagui-Tabar S."/>
            <person name="Mulder N."/>
            <person name="Nakano N."/>
            <person name="Nakauchi H."/>
            <person name="Ng P."/>
            <person name="Nilsson R."/>
            <person name="Nishiguchi S."/>
            <person name="Nishikawa S."/>
            <person name="Nori F."/>
            <person name="Ohara O."/>
            <person name="Okazaki Y."/>
            <person name="Orlando V."/>
            <person name="Pang K.C."/>
            <person name="Pavan W.J."/>
            <person name="Pavesi G."/>
            <person name="Pesole G."/>
            <person name="Petrovsky N."/>
            <person name="Piazza S."/>
            <person name="Reed J."/>
            <person name="Reid J.F."/>
            <person name="Ring B.Z."/>
            <person name="Ringwald M."/>
            <person name="Rost B."/>
            <person name="Ruan Y."/>
            <person name="Salzberg S.L."/>
            <person name="Sandelin A."/>
            <person name="Schneider C."/>
            <person name="Schoenbach C."/>
            <person name="Sekiguchi K."/>
            <person name="Semple C.A."/>
            <person name="Seno S."/>
            <person name="Sessa L."/>
            <person name="Sheng Y."/>
            <person name="Shibata Y."/>
            <person name="Shimada H."/>
            <person name="Shimada K."/>
            <person name="Silva D."/>
            <person name="Sinclair B."/>
            <person name="Sperling S."/>
            <person name="Stupka E."/>
            <person name="Sugiura K."/>
            <person name="Sultana R."/>
            <person name="Takenaka Y."/>
            <person name="Taki K."/>
            <person name="Tammoja K."/>
            <person name="Tan S.L."/>
            <person name="Tang S."/>
            <person name="Taylor M.S."/>
            <person name="Tegner J."/>
            <person name="Teichmann S.A."/>
            <person name="Ueda H.R."/>
            <person name="van Nimwegen E."/>
            <person name="Verardo R."/>
            <person name="Wei C.L."/>
            <person name="Yagi K."/>
            <person name="Yamanishi H."/>
            <person name="Zabarovsky E."/>
            <person name="Zhu S."/>
            <person name="Zimmer A."/>
            <person name="Hide W."/>
            <person name="Bult C."/>
            <person name="Grimmond S.M."/>
            <person name="Teasdale R.D."/>
            <person name="Liu E.T."/>
            <person name="Brusic V."/>
            <person name="Quackenbush J."/>
            <person name="Wahlestedt C."/>
            <person name="Mattick J.S."/>
            <person name="Hume D.A."/>
            <person name="Kai C."/>
            <person name="Sasaki D."/>
            <person name="Tomaru Y."/>
            <person name="Fukuda S."/>
            <person name="Kanamori-Katayama M."/>
            <person name="Suzuki M."/>
            <person name="Aoki J."/>
            <person name="Arakawa T."/>
            <person name="Iida J."/>
            <person name="Imamura K."/>
            <person name="Itoh M."/>
            <person name="Kato T."/>
            <person name="Kawaji H."/>
            <person name="Kawagashira N."/>
            <person name="Kawashima T."/>
            <person name="Kojima M."/>
            <person name="Kondo S."/>
            <person name="Konno H."/>
            <person name="Nakano K."/>
            <person name="Ninomiya N."/>
            <person name="Nishio T."/>
            <person name="Okada M."/>
            <person name="Plessy C."/>
            <person name="Shibata K."/>
            <person name="Shiraki T."/>
            <person name="Suzuki S."/>
            <person name="Tagami M."/>
            <person name="Waki K."/>
            <person name="Watahiki A."/>
            <person name="Okamura-Oho Y."/>
            <person name="Suzuki H."/>
            <person name="Kawai J."/>
            <person name="Hayashizaki Y."/>
        </authorList>
    </citation>
    <scope>NUCLEOTIDE SEQUENCE [LARGE SCALE MRNA]</scope>
    <source>
        <strain>C57BL/6J</strain>
        <strain>NOD</strain>
        <tissue>Tongue</tissue>
    </source>
</reference>
<reference key="5">
    <citation type="journal article" date="2004" name="Genome Res.">
        <title>The status, quality, and expansion of the NIH full-length cDNA project: the Mammalian Gene Collection (MGC).</title>
        <authorList>
            <consortium name="The MGC Project Team"/>
        </authorList>
    </citation>
    <scope>NUCLEOTIDE SEQUENCE [LARGE SCALE MRNA]</scope>
    <source>
        <tissue>Kidney</tissue>
    </source>
</reference>
<proteinExistence type="evidence at transcript level"/>
<keyword id="KW-1003">Cell membrane</keyword>
<keyword id="KW-0217">Developmental protein</keyword>
<keyword id="KW-0221">Differentiation</keyword>
<keyword id="KW-0446">Lipid-binding</keyword>
<keyword id="KW-0472">Membrane</keyword>
<keyword id="KW-0896">Oogenesis</keyword>
<keyword id="KW-0675">Receptor</keyword>
<keyword id="KW-1185">Reference proteome</keyword>
<keyword id="KW-0754">Steroid-binding</keyword>
<keyword id="KW-0812">Transmembrane</keyword>
<keyword id="KW-1133">Transmembrane helix</keyword>
<feature type="chain" id="PRO_0000218836" description="Membrane progestin receptor alpha">
    <location>
        <begin position="1"/>
        <end position="345"/>
    </location>
</feature>
<feature type="topological domain" description="Cytoplasmic" evidence="2">
    <location>
        <begin position="1"/>
        <end position="74"/>
    </location>
</feature>
<feature type="transmembrane region" description="Helical; Name=1" evidence="2">
    <location>
        <begin position="75"/>
        <end position="95"/>
    </location>
</feature>
<feature type="topological domain" description="Extracellular" evidence="2">
    <location>
        <begin position="96"/>
        <end position="102"/>
    </location>
</feature>
<feature type="transmembrane region" description="Helical; Name=2" evidence="2">
    <location>
        <begin position="103"/>
        <end position="123"/>
    </location>
</feature>
<feature type="topological domain" description="Cytoplasmic" evidence="2">
    <location>
        <begin position="124"/>
        <end position="136"/>
    </location>
</feature>
<feature type="transmembrane region" description="Helical; Name=3" evidence="2">
    <location>
        <begin position="137"/>
        <end position="157"/>
    </location>
</feature>
<feature type="topological domain" description="Extracellular" evidence="2">
    <location>
        <begin position="158"/>
        <end position="168"/>
    </location>
</feature>
<feature type="transmembrane region" description="Helical; Name=4" evidence="2">
    <location>
        <begin position="169"/>
        <end position="189"/>
    </location>
</feature>
<feature type="topological domain" description="Cytoplasmic" evidence="2">
    <location>
        <begin position="190"/>
        <end position="243"/>
    </location>
</feature>
<feature type="transmembrane region" description="Helical; Name=5" evidence="2">
    <location>
        <begin position="244"/>
        <end position="264"/>
    </location>
</feature>
<feature type="topological domain" description="Extracellular" evidence="2">
    <location>
        <begin position="265"/>
        <end position="268"/>
    </location>
</feature>
<feature type="transmembrane region" description="Helical; Name=6" evidence="2">
    <location>
        <begin position="269"/>
        <end position="289"/>
    </location>
</feature>
<feature type="topological domain" description="Cytoplasmic" evidence="2">
    <location>
        <begin position="290"/>
        <end position="315"/>
    </location>
</feature>
<feature type="transmembrane region" description="Helical; Name=7" evidence="2">
    <location>
        <begin position="316"/>
        <end position="336"/>
    </location>
</feature>
<feature type="topological domain" description="Extracellular" evidence="2">
    <location>
        <begin position="337"/>
        <end position="345"/>
    </location>
</feature>
<feature type="sequence conflict" description="In Ref. 1; AAO47231." evidence="5" ref="1">
    <original>F</original>
    <variation>L</variation>
    <location>
        <position position="280"/>
    </location>
</feature>
<feature type="sequence conflict" description="In Ref. 1; AAO47231." evidence="5" ref="1">
    <original>H</original>
    <variation>R</variation>
    <location>
        <position position="312"/>
    </location>
</feature>
<sequence length="345" mass="39306">MAMAVAQKFNHLLSSLWHVGQKPPQPEPVFTVDRAQVPPLFWKPYIYAGYRPLHQNWCFYFRTLFQRHNEAVNVWTHLLAALALLLRLIGLAASVDFREDPHALPLFFIVLASFTYLSFSAVAHLLQAKSEFWHYSFFFLDYVGVAVYQFGSALAHFYYAIEPSWHDKVQAIFLPTAAFLAWLSCAGSCYNKYSQKPGLLGRIFQEAPSALAYVLDISPVLHRIIVSPLPAEEDPALLYHKCQVVFFLLAAAFFSTVMPESWFPGSCHIFGQGHQVFHVFLVLCTLAQLEAVTLDYQARRGIYEPLHARWPHNFSGLFLLTVASSSLTALLLSQLVRRKLHQKTK</sequence>
<dbReference type="EMBL" id="AF313618">
    <property type="protein sequence ID" value="AAO47231.1"/>
    <property type="molecule type" value="mRNA"/>
</dbReference>
<dbReference type="EMBL" id="AY278956">
    <property type="protein sequence ID" value="AAP35062.1"/>
    <property type="molecule type" value="mRNA"/>
</dbReference>
<dbReference type="EMBL" id="AY424296">
    <property type="protein sequence ID" value="AAR08384.1"/>
    <property type="molecule type" value="mRNA"/>
</dbReference>
<dbReference type="EMBL" id="AK009450">
    <property type="protein sequence ID" value="BAB26296.1"/>
    <property type="molecule type" value="mRNA"/>
</dbReference>
<dbReference type="EMBL" id="AK170307">
    <property type="protein sequence ID" value="BAE41704.1"/>
    <property type="molecule type" value="mRNA"/>
</dbReference>
<dbReference type="EMBL" id="BC022922">
    <property type="protein sequence ID" value="AAH22922.1"/>
    <property type="molecule type" value="mRNA"/>
</dbReference>
<dbReference type="CCDS" id="CCDS18773.1"/>
<dbReference type="RefSeq" id="NP_001272774.1">
    <property type="nucleotide sequence ID" value="NM_001285845.2"/>
</dbReference>
<dbReference type="RefSeq" id="NP_001272775.1">
    <property type="nucleotide sequence ID" value="NM_001285846.2"/>
</dbReference>
<dbReference type="RefSeq" id="NP_001272776.1">
    <property type="nucleotide sequence ID" value="NM_001285847.2"/>
</dbReference>
<dbReference type="RefSeq" id="NP_001272778.1">
    <property type="nucleotide sequence ID" value="NM_001285849.2"/>
</dbReference>
<dbReference type="RefSeq" id="NP_082271.1">
    <property type="nucleotide sequence ID" value="NM_027995.4"/>
</dbReference>
<dbReference type="RefSeq" id="XP_006539254.1">
    <property type="nucleotide sequence ID" value="XM_006539191.3"/>
</dbReference>
<dbReference type="RefSeq" id="XP_036020344.1">
    <property type="nucleotide sequence ID" value="XM_036164451.1"/>
</dbReference>
<dbReference type="SMR" id="Q80ZE4"/>
<dbReference type="FunCoup" id="Q80ZE4">
    <property type="interactions" value="642"/>
</dbReference>
<dbReference type="STRING" id="10090.ENSMUSP00000125932"/>
<dbReference type="iPTMnet" id="Q80ZE4"/>
<dbReference type="PhosphoSitePlus" id="Q80ZE4"/>
<dbReference type="PaxDb" id="10090-ENSMUSP00000080240"/>
<dbReference type="ProteomicsDB" id="294009"/>
<dbReference type="Antibodypedia" id="30521">
    <property type="antibodies" value="157 antibodies from 26 providers"/>
</dbReference>
<dbReference type="DNASU" id="71904"/>
<dbReference type="Ensembl" id="ENSMUST00000081525.4">
    <property type="protein sequence ID" value="ENSMUSP00000080240.4"/>
    <property type="gene ID" value="ENSMUSG00000037348.16"/>
</dbReference>
<dbReference type="Ensembl" id="ENSMUST00000095074.4">
    <property type="protein sequence ID" value="ENSMUSP00000125932.2"/>
    <property type="gene ID" value="ENSMUSG00000037348.16"/>
</dbReference>
<dbReference type="GeneID" id="71904"/>
<dbReference type="KEGG" id="mmu:71904"/>
<dbReference type="UCSC" id="uc008vfd.2">
    <property type="organism name" value="mouse"/>
</dbReference>
<dbReference type="AGR" id="MGI:1919154"/>
<dbReference type="CTD" id="164091"/>
<dbReference type="MGI" id="MGI:1919154">
    <property type="gene designation" value="Paqr7"/>
</dbReference>
<dbReference type="VEuPathDB" id="HostDB:ENSMUSG00000037348"/>
<dbReference type="eggNOG" id="KOG0748">
    <property type="taxonomic scope" value="Eukaryota"/>
</dbReference>
<dbReference type="GeneTree" id="ENSGT00940000161438"/>
<dbReference type="InParanoid" id="Q80ZE4"/>
<dbReference type="OMA" id="FIFTTCC"/>
<dbReference type="OrthoDB" id="535992at2759"/>
<dbReference type="PhylomeDB" id="Q80ZE4"/>
<dbReference type="TreeFam" id="TF319738"/>
<dbReference type="BioGRID-ORCS" id="71904">
    <property type="hits" value="4 hits in 80 CRISPR screens"/>
</dbReference>
<dbReference type="ChiTaRS" id="Paqr7">
    <property type="organism name" value="mouse"/>
</dbReference>
<dbReference type="PRO" id="PR:Q80ZE4"/>
<dbReference type="Proteomes" id="UP000000589">
    <property type="component" value="Chromosome 4"/>
</dbReference>
<dbReference type="RNAct" id="Q80ZE4">
    <property type="molecule type" value="protein"/>
</dbReference>
<dbReference type="Bgee" id="ENSMUSG00000037348">
    <property type="expression patterns" value="Expressed in skin of external ear and 202 other cell types or tissues"/>
</dbReference>
<dbReference type="ExpressionAtlas" id="Q80ZE4">
    <property type="expression patterns" value="baseline and differential"/>
</dbReference>
<dbReference type="GO" id="GO:0005886">
    <property type="term" value="C:plasma membrane"/>
    <property type="evidence" value="ECO:0007669"/>
    <property type="project" value="UniProtKB-SubCell"/>
</dbReference>
<dbReference type="GO" id="GO:0005496">
    <property type="term" value="F:steroid binding"/>
    <property type="evidence" value="ECO:0007669"/>
    <property type="project" value="UniProtKB-KW"/>
</dbReference>
<dbReference type="GO" id="GO:0048477">
    <property type="term" value="P:oogenesis"/>
    <property type="evidence" value="ECO:0007669"/>
    <property type="project" value="UniProtKB-KW"/>
</dbReference>
<dbReference type="InterPro" id="IPR004254">
    <property type="entry name" value="AdipoR/HlyIII-related"/>
</dbReference>
<dbReference type="PANTHER" id="PTHR20855">
    <property type="entry name" value="ADIPOR/PROGESTIN RECEPTOR-RELATED"/>
    <property type="match status" value="1"/>
</dbReference>
<dbReference type="PANTHER" id="PTHR20855:SF41">
    <property type="entry name" value="MEMBRANE PROGESTIN RECEPTOR ALPHA"/>
    <property type="match status" value="1"/>
</dbReference>
<dbReference type="Pfam" id="PF03006">
    <property type="entry name" value="HlyIII"/>
    <property type="match status" value="1"/>
</dbReference>
<gene>
    <name evidence="6" type="primary">Paqr7</name>
    <name type="synonym">Mpra</name>
    <name type="synonym">Pglp</name>
</gene>
<accession>Q80ZE4</accession>
<accession>Q3TDA0</accession>
<accession>Q8BNZ7</accession>
<accession>Q9D790</accession>
<organism>
    <name type="scientific">Mus musculus</name>
    <name type="common">Mouse</name>
    <dbReference type="NCBI Taxonomy" id="10090"/>
    <lineage>
        <taxon>Eukaryota</taxon>
        <taxon>Metazoa</taxon>
        <taxon>Chordata</taxon>
        <taxon>Craniata</taxon>
        <taxon>Vertebrata</taxon>
        <taxon>Euteleostomi</taxon>
        <taxon>Mammalia</taxon>
        <taxon>Eutheria</taxon>
        <taxon>Euarchontoglires</taxon>
        <taxon>Glires</taxon>
        <taxon>Rodentia</taxon>
        <taxon>Myomorpha</taxon>
        <taxon>Muroidea</taxon>
        <taxon>Muridae</taxon>
        <taxon>Murinae</taxon>
        <taxon>Mus</taxon>
        <taxon>Mus</taxon>
    </lineage>
</organism>
<comment type="function">
    <text evidence="1">Plasma membrane progesterone (P4) receptor coupled to G proteins. Seems to act through a G(i) mediated pathway. May be involved in oocyte maturation. Involved in neurosteroid inhibition of apoptosis. Also binds dehydroepiandrosterone (DHEA), pregnanolone, pregnenolone and allopregnanolone.</text>
</comment>
<comment type="subcellular location">
    <subcellularLocation>
        <location evidence="1">Cell membrane</location>
        <topology evidence="2">Multi-pass membrane protein</topology>
    </subcellularLocation>
</comment>
<comment type="tissue specificity">
    <text evidence="3">Detected in most adult tissues. Higher expression found in white fat and liver than brown fat and skeletal muscle.</text>
</comment>
<comment type="induction">
    <text evidence="3">Up-regulated in PPAR gamma 1-induced adipogenic liver.</text>
</comment>
<comment type="miscellaneous">
    <text evidence="1">Non-classical progesterone receptors involved in extranuclear signaling are classified in 2 groups: the class II progestin and adipoQ receptor (PAQR) family (also called mPRs) (PAQR5, PAQR6, PAQR7, PAQR8 and PAQR9) and the b5-like heme/steroid-binding protein family (also called MAPRs) (PGRMC1, PGRMC2, NENF and CYB5D2).</text>
</comment>
<comment type="similarity">
    <text evidence="5">Belongs to the ADIPOR family.</text>
</comment>
<name>PAQR7_MOUSE</name>